<dbReference type="EMBL" id="FM178379">
    <property type="protein sequence ID" value="CAQ80554.1"/>
    <property type="molecule type" value="Genomic_DNA"/>
</dbReference>
<dbReference type="RefSeq" id="WP_012551292.1">
    <property type="nucleotide sequence ID" value="NC_011312.1"/>
</dbReference>
<dbReference type="SMR" id="B6ENR7"/>
<dbReference type="KEGG" id="vsa:VSAL_I2870"/>
<dbReference type="eggNOG" id="COG0080">
    <property type="taxonomic scope" value="Bacteria"/>
</dbReference>
<dbReference type="HOGENOM" id="CLU_074237_2_0_6"/>
<dbReference type="Proteomes" id="UP000001730">
    <property type="component" value="Chromosome 1"/>
</dbReference>
<dbReference type="GO" id="GO:0022625">
    <property type="term" value="C:cytosolic large ribosomal subunit"/>
    <property type="evidence" value="ECO:0007669"/>
    <property type="project" value="TreeGrafter"/>
</dbReference>
<dbReference type="GO" id="GO:0070180">
    <property type="term" value="F:large ribosomal subunit rRNA binding"/>
    <property type="evidence" value="ECO:0007669"/>
    <property type="project" value="UniProtKB-UniRule"/>
</dbReference>
<dbReference type="GO" id="GO:0003735">
    <property type="term" value="F:structural constituent of ribosome"/>
    <property type="evidence" value="ECO:0007669"/>
    <property type="project" value="InterPro"/>
</dbReference>
<dbReference type="GO" id="GO:0006412">
    <property type="term" value="P:translation"/>
    <property type="evidence" value="ECO:0007669"/>
    <property type="project" value="UniProtKB-UniRule"/>
</dbReference>
<dbReference type="CDD" id="cd00349">
    <property type="entry name" value="Ribosomal_L11"/>
    <property type="match status" value="1"/>
</dbReference>
<dbReference type="FunFam" id="1.10.10.250:FF:000001">
    <property type="entry name" value="50S ribosomal protein L11"/>
    <property type="match status" value="1"/>
</dbReference>
<dbReference type="FunFam" id="3.30.1550.10:FF:000001">
    <property type="entry name" value="50S ribosomal protein L11"/>
    <property type="match status" value="1"/>
</dbReference>
<dbReference type="Gene3D" id="1.10.10.250">
    <property type="entry name" value="Ribosomal protein L11, C-terminal domain"/>
    <property type="match status" value="1"/>
</dbReference>
<dbReference type="Gene3D" id="3.30.1550.10">
    <property type="entry name" value="Ribosomal protein L11/L12, N-terminal domain"/>
    <property type="match status" value="1"/>
</dbReference>
<dbReference type="HAMAP" id="MF_00736">
    <property type="entry name" value="Ribosomal_uL11"/>
    <property type="match status" value="1"/>
</dbReference>
<dbReference type="InterPro" id="IPR000911">
    <property type="entry name" value="Ribosomal_uL11"/>
</dbReference>
<dbReference type="InterPro" id="IPR006519">
    <property type="entry name" value="Ribosomal_uL11_bac-typ"/>
</dbReference>
<dbReference type="InterPro" id="IPR020783">
    <property type="entry name" value="Ribosomal_uL11_C"/>
</dbReference>
<dbReference type="InterPro" id="IPR036769">
    <property type="entry name" value="Ribosomal_uL11_C_sf"/>
</dbReference>
<dbReference type="InterPro" id="IPR020785">
    <property type="entry name" value="Ribosomal_uL11_CS"/>
</dbReference>
<dbReference type="InterPro" id="IPR020784">
    <property type="entry name" value="Ribosomal_uL11_N"/>
</dbReference>
<dbReference type="InterPro" id="IPR036796">
    <property type="entry name" value="Ribosomal_uL11_N_sf"/>
</dbReference>
<dbReference type="NCBIfam" id="TIGR01632">
    <property type="entry name" value="L11_bact"/>
    <property type="match status" value="1"/>
</dbReference>
<dbReference type="PANTHER" id="PTHR11661">
    <property type="entry name" value="60S RIBOSOMAL PROTEIN L12"/>
    <property type="match status" value="1"/>
</dbReference>
<dbReference type="PANTHER" id="PTHR11661:SF1">
    <property type="entry name" value="LARGE RIBOSOMAL SUBUNIT PROTEIN UL11M"/>
    <property type="match status" value="1"/>
</dbReference>
<dbReference type="Pfam" id="PF00298">
    <property type="entry name" value="Ribosomal_L11"/>
    <property type="match status" value="1"/>
</dbReference>
<dbReference type="Pfam" id="PF03946">
    <property type="entry name" value="Ribosomal_L11_N"/>
    <property type="match status" value="1"/>
</dbReference>
<dbReference type="SMART" id="SM00649">
    <property type="entry name" value="RL11"/>
    <property type="match status" value="1"/>
</dbReference>
<dbReference type="SUPFAM" id="SSF54747">
    <property type="entry name" value="Ribosomal L11/L12e N-terminal domain"/>
    <property type="match status" value="1"/>
</dbReference>
<dbReference type="SUPFAM" id="SSF46906">
    <property type="entry name" value="Ribosomal protein L11, C-terminal domain"/>
    <property type="match status" value="1"/>
</dbReference>
<dbReference type="PROSITE" id="PS00359">
    <property type="entry name" value="RIBOSOMAL_L11"/>
    <property type="match status" value="1"/>
</dbReference>
<proteinExistence type="inferred from homology"/>
<accession>B6ENR7</accession>
<protein>
    <recommendedName>
        <fullName evidence="1">Large ribosomal subunit protein uL11</fullName>
    </recommendedName>
    <alternativeName>
        <fullName evidence="3">50S ribosomal protein L11</fullName>
    </alternativeName>
</protein>
<name>RL11_ALISL</name>
<organism>
    <name type="scientific">Aliivibrio salmonicida (strain LFI1238)</name>
    <name type="common">Vibrio salmonicida (strain LFI1238)</name>
    <dbReference type="NCBI Taxonomy" id="316275"/>
    <lineage>
        <taxon>Bacteria</taxon>
        <taxon>Pseudomonadati</taxon>
        <taxon>Pseudomonadota</taxon>
        <taxon>Gammaproteobacteria</taxon>
        <taxon>Vibrionales</taxon>
        <taxon>Vibrionaceae</taxon>
        <taxon>Aliivibrio</taxon>
    </lineage>
</organism>
<gene>
    <name evidence="1" type="primary">rplK</name>
    <name type="ordered locus">VSAL_I2870</name>
</gene>
<feature type="chain" id="PRO_1000132856" description="Large ribosomal subunit protein uL11">
    <location>
        <begin position="1"/>
        <end position="142"/>
    </location>
</feature>
<feature type="region of interest" description="Disordered" evidence="2">
    <location>
        <begin position="84"/>
        <end position="103"/>
    </location>
</feature>
<evidence type="ECO:0000255" key="1">
    <source>
        <dbReference type="HAMAP-Rule" id="MF_00736"/>
    </source>
</evidence>
<evidence type="ECO:0000256" key="2">
    <source>
        <dbReference type="SAM" id="MobiDB-lite"/>
    </source>
</evidence>
<evidence type="ECO:0000305" key="3"/>
<keyword id="KW-0488">Methylation</keyword>
<keyword id="KW-0687">Ribonucleoprotein</keyword>
<keyword id="KW-0689">Ribosomal protein</keyword>
<keyword id="KW-0694">RNA-binding</keyword>
<keyword id="KW-0699">rRNA-binding</keyword>
<sequence length="142" mass="14764">MAKKVEAYIKLQVAAGMANPSPPVGPALGQHGVNIMEFCKAFNARTESVEKGLPTPVVISVYSDRSFTFITKTPPAAVLLKKAAGVKSGSGRPNSDKVGTVTDSQIQEIAETKAADMTGADIEAMKRSIAGTARSMGLVVEG</sequence>
<reference key="1">
    <citation type="journal article" date="2008" name="BMC Genomics">
        <title>The genome sequence of the fish pathogen Aliivibrio salmonicida strain LFI1238 shows extensive evidence of gene decay.</title>
        <authorList>
            <person name="Hjerde E."/>
            <person name="Lorentzen M.S."/>
            <person name="Holden M.T."/>
            <person name="Seeger K."/>
            <person name="Paulsen S."/>
            <person name="Bason N."/>
            <person name="Churcher C."/>
            <person name="Harris D."/>
            <person name="Norbertczak H."/>
            <person name="Quail M.A."/>
            <person name="Sanders S."/>
            <person name="Thurston S."/>
            <person name="Parkhill J."/>
            <person name="Willassen N.P."/>
            <person name="Thomson N.R."/>
        </authorList>
    </citation>
    <scope>NUCLEOTIDE SEQUENCE [LARGE SCALE GENOMIC DNA]</scope>
    <source>
        <strain>LFI1238</strain>
    </source>
</reference>
<comment type="function">
    <text evidence="1">Forms part of the ribosomal stalk which helps the ribosome interact with GTP-bound translation factors.</text>
</comment>
<comment type="subunit">
    <text evidence="1">Part of the ribosomal stalk of the 50S ribosomal subunit. Interacts with L10 and the large rRNA to form the base of the stalk. L10 forms an elongated spine to which L12 dimers bind in a sequential fashion forming a multimeric L10(L12)X complex.</text>
</comment>
<comment type="PTM">
    <text evidence="1">One or more lysine residues are methylated.</text>
</comment>
<comment type="similarity">
    <text evidence="1">Belongs to the universal ribosomal protein uL11 family.</text>
</comment>